<reference key="1">
    <citation type="journal article" date="2008" name="PLoS ONE">
        <title>Genome sequence of the saprophyte Leptospira biflexa provides insights into the evolution of Leptospira and the pathogenesis of leptospirosis.</title>
        <authorList>
            <person name="Picardeau M."/>
            <person name="Bulach D.M."/>
            <person name="Bouchier C."/>
            <person name="Zuerner R.L."/>
            <person name="Zidane N."/>
            <person name="Wilson P.J."/>
            <person name="Creno S."/>
            <person name="Kuczek E.S."/>
            <person name="Bommezzadri S."/>
            <person name="Davis J.C."/>
            <person name="McGrath A."/>
            <person name="Johnson M.J."/>
            <person name="Boursaux-Eude C."/>
            <person name="Seemann T."/>
            <person name="Rouy Z."/>
            <person name="Coppel R.L."/>
            <person name="Rood J.I."/>
            <person name="Lajus A."/>
            <person name="Davies J.K."/>
            <person name="Medigue C."/>
            <person name="Adler B."/>
        </authorList>
    </citation>
    <scope>NUCLEOTIDE SEQUENCE [LARGE SCALE GENOMIC DNA]</scope>
    <source>
        <strain>Patoc 1 / ATCC 23582 / Paris</strain>
    </source>
</reference>
<dbReference type="EMBL" id="CP000786">
    <property type="protein sequence ID" value="ABZ98065.1"/>
    <property type="molecule type" value="Genomic_DNA"/>
</dbReference>
<dbReference type="RefSeq" id="WP_012388938.1">
    <property type="nucleotide sequence ID" value="NC_010602.1"/>
</dbReference>
<dbReference type="SMR" id="B0SSH5"/>
<dbReference type="STRING" id="456481.LEPBI_I1962"/>
<dbReference type="KEGG" id="lbi:LEPBI_I1962"/>
<dbReference type="HOGENOM" id="CLU_037562_3_2_12"/>
<dbReference type="OrthoDB" id="9793353at2"/>
<dbReference type="BioCyc" id="LBIF456481:LEPBI_RS09695-MONOMER"/>
<dbReference type="Proteomes" id="UP000001847">
    <property type="component" value="Chromosome I"/>
</dbReference>
<dbReference type="GO" id="GO:1990904">
    <property type="term" value="C:ribonucleoprotein complex"/>
    <property type="evidence" value="ECO:0007669"/>
    <property type="project" value="UniProtKB-KW"/>
</dbReference>
<dbReference type="GO" id="GO:0005840">
    <property type="term" value="C:ribosome"/>
    <property type="evidence" value="ECO:0007669"/>
    <property type="project" value="UniProtKB-KW"/>
</dbReference>
<dbReference type="GO" id="GO:0019843">
    <property type="term" value="F:rRNA binding"/>
    <property type="evidence" value="ECO:0007669"/>
    <property type="project" value="UniProtKB-UniRule"/>
</dbReference>
<dbReference type="GO" id="GO:0003735">
    <property type="term" value="F:structural constituent of ribosome"/>
    <property type="evidence" value="ECO:0007669"/>
    <property type="project" value="InterPro"/>
</dbReference>
<dbReference type="GO" id="GO:0006412">
    <property type="term" value="P:translation"/>
    <property type="evidence" value="ECO:0007669"/>
    <property type="project" value="UniProtKB-UniRule"/>
</dbReference>
<dbReference type="Gene3D" id="3.30.70.330">
    <property type="match status" value="1"/>
</dbReference>
<dbReference type="HAMAP" id="MF_01369_B">
    <property type="entry name" value="Ribosomal_uL23_B"/>
    <property type="match status" value="1"/>
</dbReference>
<dbReference type="InterPro" id="IPR012677">
    <property type="entry name" value="Nucleotide-bd_a/b_plait_sf"/>
</dbReference>
<dbReference type="InterPro" id="IPR013025">
    <property type="entry name" value="Ribosomal_uL23-like"/>
</dbReference>
<dbReference type="InterPro" id="IPR012678">
    <property type="entry name" value="Ribosomal_uL23/eL15/eS24_sf"/>
</dbReference>
<dbReference type="NCBIfam" id="NF004363">
    <property type="entry name" value="PRK05738.2-4"/>
    <property type="match status" value="1"/>
</dbReference>
<dbReference type="NCBIfam" id="NF004369">
    <property type="entry name" value="PRK05738.3-5"/>
    <property type="match status" value="1"/>
</dbReference>
<dbReference type="Pfam" id="PF00276">
    <property type="entry name" value="Ribosomal_L23"/>
    <property type="match status" value="1"/>
</dbReference>
<dbReference type="SUPFAM" id="SSF54189">
    <property type="entry name" value="Ribosomal proteins S24e, L23 and L15e"/>
    <property type="match status" value="1"/>
</dbReference>
<organism>
    <name type="scientific">Leptospira biflexa serovar Patoc (strain Patoc 1 / ATCC 23582 / Paris)</name>
    <dbReference type="NCBI Taxonomy" id="456481"/>
    <lineage>
        <taxon>Bacteria</taxon>
        <taxon>Pseudomonadati</taxon>
        <taxon>Spirochaetota</taxon>
        <taxon>Spirochaetia</taxon>
        <taxon>Leptospirales</taxon>
        <taxon>Leptospiraceae</taxon>
        <taxon>Leptospira</taxon>
    </lineage>
</organism>
<protein>
    <recommendedName>
        <fullName evidence="1">Large ribosomal subunit protein uL23</fullName>
    </recommendedName>
    <alternativeName>
        <fullName evidence="2">50S ribosomal protein L23</fullName>
    </alternativeName>
</protein>
<gene>
    <name evidence="1" type="primary">rplW</name>
    <name type="ordered locus">LEPBI_I1962</name>
</gene>
<sequence length="101" mass="11554">MNLENVILSPVVTEKSQDLQTIGERMGKRTVKYTFKVHPDANKTLIKQALKQMYNVVPTNVNVAVYRGKMKRFRNMPSQRPHYKKAVVTFADGANLDFAKV</sequence>
<accession>B0SSH5</accession>
<evidence type="ECO:0000255" key="1">
    <source>
        <dbReference type="HAMAP-Rule" id="MF_01369"/>
    </source>
</evidence>
<evidence type="ECO:0000305" key="2"/>
<proteinExistence type="inferred from homology"/>
<feature type="chain" id="PRO_1000144583" description="Large ribosomal subunit protein uL23">
    <location>
        <begin position="1"/>
        <end position="101"/>
    </location>
</feature>
<comment type="function">
    <text evidence="1">One of the early assembly proteins it binds 23S rRNA. One of the proteins that surrounds the polypeptide exit tunnel on the outside of the ribosome. Forms the main docking site for trigger factor binding to the ribosome.</text>
</comment>
<comment type="subunit">
    <text evidence="1">Part of the 50S ribosomal subunit. Contacts protein L29, and trigger factor when it is bound to the ribosome.</text>
</comment>
<comment type="similarity">
    <text evidence="1">Belongs to the universal ribosomal protein uL23 family.</text>
</comment>
<keyword id="KW-1185">Reference proteome</keyword>
<keyword id="KW-0687">Ribonucleoprotein</keyword>
<keyword id="KW-0689">Ribosomal protein</keyword>
<keyword id="KW-0694">RNA-binding</keyword>
<keyword id="KW-0699">rRNA-binding</keyword>
<name>RL23_LEPBP</name>